<protein>
    <recommendedName>
        <fullName evidence="7">Oxidoreductase sirO</fullName>
        <ecNumber evidence="8">1.1.1.-</ecNumber>
    </recommendedName>
    <alternativeName>
        <fullName evidence="7">Sirodesmin biosynthesis protein O</fullName>
    </alternativeName>
</protein>
<proteinExistence type="inferred from homology"/>
<name>SIRO_LEPMC</name>
<feature type="chain" id="PRO_0000437718" description="Oxidoreductase sirO">
    <location>
        <begin position="1"/>
        <end position="329"/>
    </location>
</feature>
<feature type="active site" description="Proton donor" evidence="2">
    <location>
        <position position="59"/>
    </location>
</feature>
<feature type="binding site" evidence="2">
    <location>
        <position position="54"/>
    </location>
    <ligand>
        <name>NADP(+)</name>
        <dbReference type="ChEBI" id="CHEBI:58349"/>
    </ligand>
</feature>
<feature type="binding site" evidence="2">
    <location>
        <position position="118"/>
    </location>
    <ligand>
        <name>substrate</name>
    </ligand>
</feature>
<feature type="binding site" evidence="2">
    <location>
        <begin position="148"/>
        <end position="149"/>
    </location>
    <ligand>
        <name>NADP(+)</name>
        <dbReference type="ChEBI" id="CHEBI:58349"/>
    </ligand>
</feature>
<feature type="binding site" evidence="2">
    <location>
        <position position="174"/>
    </location>
    <ligand>
        <name>NADP(+)</name>
        <dbReference type="ChEBI" id="CHEBI:58349"/>
    </ligand>
</feature>
<feature type="binding site" evidence="2">
    <location>
        <begin position="203"/>
        <end position="213"/>
    </location>
    <ligand>
        <name>NADP(+)</name>
        <dbReference type="ChEBI" id="CHEBI:58349"/>
    </ligand>
</feature>
<feature type="binding site" evidence="2">
    <location>
        <begin position="288"/>
        <end position="296"/>
    </location>
    <ligand>
        <name>NADP(+)</name>
        <dbReference type="ChEBI" id="CHEBI:58349"/>
    </ligand>
</feature>
<feature type="site" description="Lowers pKa of active site Tyr" evidence="1">
    <location>
        <position position="82"/>
    </location>
</feature>
<organism>
    <name type="scientific">Leptosphaeria maculans</name>
    <name type="common">Blackleg fungus</name>
    <name type="synonym">Phoma lingam</name>
    <dbReference type="NCBI Taxonomy" id="5022"/>
    <lineage>
        <taxon>Eukaryota</taxon>
        <taxon>Fungi</taxon>
        <taxon>Dikarya</taxon>
        <taxon>Ascomycota</taxon>
        <taxon>Pezizomycotina</taxon>
        <taxon>Dothideomycetes</taxon>
        <taxon>Pleosporomycetidae</taxon>
        <taxon>Pleosporales</taxon>
        <taxon>Pleosporineae</taxon>
        <taxon>Leptosphaeriaceae</taxon>
        <taxon>Plenodomus</taxon>
        <taxon>Plenodomus lingam/Leptosphaeria maculans species complex</taxon>
    </lineage>
</organism>
<accession>Q6Q875</accession>
<reference key="1">
    <citation type="journal article" date="2004" name="Mol. Microbiol.">
        <title>The sirodesmin biosynthetic gene cluster of the plant pathogenic fungus Leptosphaeria maculans.</title>
        <authorList>
            <person name="Gardiner D.M."/>
            <person name="Cozijnsen A.J."/>
            <person name="Wilson L.M."/>
            <person name="Pedras M.S."/>
            <person name="Howlett B.J."/>
        </authorList>
    </citation>
    <scope>NUCLEOTIDE SEQUENCE [GENOMIC DNA]</scope>
    <scope>FUNCTION</scope>
</reference>
<reference key="2">
    <citation type="journal article" date="2008" name="Mycol. Res.">
        <title>Biosynthetic gene clusters for epipolythiodioxopiperazines in filamentous fungi.</title>
        <authorList>
            <person name="Fox E.M."/>
            <person name="Howlett B.J."/>
        </authorList>
    </citation>
    <scope>FUNCTION</scope>
</reference>
<reference key="3">
    <citation type="journal article" date="2010" name="Microbiology">
        <title>A tyrosine O-prenyltransferase catalyses the first pathway-specific step in the biosynthesis of sirodesmin PL.</title>
        <authorList>
            <person name="Kremer A."/>
            <person name="Li S.M."/>
        </authorList>
    </citation>
    <scope>FUNCTION</scope>
</reference>
<reference key="4">
    <citation type="journal article" date="2011" name="Appl. Microbiol. Biotechnol.">
        <title>The tyrosine O-prenyltransferase SirD catalyzes O-, N-, and C-prenylations.</title>
        <authorList>
            <person name="Zou H.X."/>
            <person name="Xie X."/>
            <person name="Zheng X.D."/>
            <person name="Li S.M."/>
        </authorList>
    </citation>
    <scope>FUNCTION</scope>
</reference>
<reference key="5">
    <citation type="journal article" date="2013" name="ACS Chem. Biol.">
        <title>Tyrosine O-prenyltransferase SirD catalyzes S-, C-, and N-prenylations on tyrosine and tryptophan derivatives.</title>
        <authorList>
            <person name="Rudolf J.D."/>
            <person name="Poulter C.D."/>
        </authorList>
    </citation>
    <scope>FUNCTION</scope>
</reference>
<reference key="6">
    <citation type="journal article" date="2016" name="PLoS ONE">
        <title>The epipolythiodiketopiperazine gene cluster in Claviceps purpurea: dysfunctional cytochrome P450 enzyme prevents formation of the previously unknown clapurines.</title>
        <authorList>
            <person name="Dopstadt J."/>
            <person name="Neubauer L."/>
            <person name="Tudzynski P."/>
            <person name="Humpf H.U."/>
        </authorList>
    </citation>
    <scope>FUNCTION</scope>
</reference>
<sequence length="329" mass="35959">MSPSAHPDAPIIIFGTANFGSPEDSKGKLFGPVTVEQGREYLDVLQEFNVDVLDTARIYSGGESEKLLGALDASREFKMCTKASGTLDGCGTRDAVLSAFKASSEALGVKEVDTYYLHTPDRTTSLEETMDTINELHKAGSFKTFGISNLRADEVQHLHTYARSKNYILPTIYQGTYNLLSRQCETKLLPLLRTLGIRFYAYSPLCCGLLINAEAKLQASTGRWDTSHFGGKFMNALYNKPSYIAASNAFQDMCGKYGVRPAGAAYRWVRYHSELEGGLGDGMVVGASSARQLEESLGEIEKGPLEEGLVGELEGLWDLVKEDAPAYSL</sequence>
<dbReference type="EC" id="1.1.1.-" evidence="8"/>
<dbReference type="EMBL" id="AY553235">
    <property type="protein sequence ID" value="AAS92553.1"/>
    <property type="molecule type" value="Genomic_DNA"/>
</dbReference>
<dbReference type="RefSeq" id="XP_003842412.1">
    <property type="nucleotide sequence ID" value="XM_003842364.1"/>
</dbReference>
<dbReference type="SMR" id="Q6Q875"/>
<dbReference type="OMA" id="FYKPSYM"/>
<dbReference type="GO" id="GO:0016491">
    <property type="term" value="F:oxidoreductase activity"/>
    <property type="evidence" value="ECO:0007669"/>
    <property type="project" value="UniProtKB-KW"/>
</dbReference>
<dbReference type="CDD" id="cd19075">
    <property type="entry name" value="AKR_AKR7A1-5"/>
    <property type="match status" value="1"/>
</dbReference>
<dbReference type="Gene3D" id="3.20.20.100">
    <property type="entry name" value="NADP-dependent oxidoreductase domain"/>
    <property type="match status" value="1"/>
</dbReference>
<dbReference type="InterPro" id="IPR050523">
    <property type="entry name" value="AKR_Detox_Biosynth"/>
</dbReference>
<dbReference type="InterPro" id="IPR023210">
    <property type="entry name" value="NADP_OxRdtase_dom"/>
</dbReference>
<dbReference type="InterPro" id="IPR036812">
    <property type="entry name" value="NADP_OxRdtase_dom_sf"/>
</dbReference>
<dbReference type="PANTHER" id="PTHR43364:SF4">
    <property type="entry name" value="NAD(P)-LINKED OXIDOREDUCTASE SUPERFAMILY PROTEIN"/>
    <property type="match status" value="1"/>
</dbReference>
<dbReference type="PANTHER" id="PTHR43364">
    <property type="entry name" value="NADH-SPECIFIC METHYLGLYOXAL REDUCTASE-RELATED"/>
    <property type="match status" value="1"/>
</dbReference>
<dbReference type="Pfam" id="PF00248">
    <property type="entry name" value="Aldo_ket_red"/>
    <property type="match status" value="1"/>
</dbReference>
<dbReference type="SUPFAM" id="SSF51430">
    <property type="entry name" value="NAD(P)-linked oxidoreductase"/>
    <property type="match status" value="1"/>
</dbReference>
<evidence type="ECO:0000250" key="1">
    <source>
        <dbReference type="UniProtKB" id="O43488"/>
    </source>
</evidence>
<evidence type="ECO:0000250" key="2">
    <source>
        <dbReference type="UniProtKB" id="Q8CG76"/>
    </source>
</evidence>
<evidence type="ECO:0000269" key="3">
    <source>
    </source>
</evidence>
<evidence type="ECO:0000269" key="4">
    <source>
    </source>
</evidence>
<evidence type="ECO:0000269" key="5">
    <source>
    </source>
</evidence>
<evidence type="ECO:0000269" key="6">
    <source>
    </source>
</evidence>
<evidence type="ECO:0000303" key="7">
    <source>
    </source>
</evidence>
<evidence type="ECO:0000305" key="8"/>
<evidence type="ECO:0000305" key="9">
    <source>
    </source>
</evidence>
<evidence type="ECO:0000305" key="10">
    <source>
    </source>
</evidence>
<keyword id="KW-0521">NADP</keyword>
<keyword id="KW-0560">Oxidoreductase</keyword>
<keyword id="KW-0843">Virulence</keyword>
<comment type="function">
    <text evidence="3 4 5 6 9 10">Oxidoreductase; part of the gene cluster that mediates the biosynthesis of sirodesmin PL, an epipolythiodioxopiperazine (ETP) characterized by a disulfide bridged cyclic dipeptide and that acts as a phytotoxin which is involved in the blackleg didease of canola (PubMed:15387811, PubMed:18272357, PubMed:19762440). SirD catalyzes the O-prenylation of L-tyrosine (L-Tyr) in the presence of dimethylallyl diphosphate (DMAPP) to yield 4-O-dimethylallyl-L-Tyr, and therefore represents probably the first pathway-specific enzyme in the biosynthesis of sirodesmin PL (PubMed:19762440, PubMed:21038099, PubMed:24083562). 4-O-dimethylallyl-L-Tyr, then undergoes condensation with L-Ser in a reaction catalyzed by the non-ribosomal peptide synthase sirP to form the diketopiperazine (DKP) backbone (PubMed:18272357). Further bishydroxylation of the DKP performed by the cytochrome P450 monooxygenase sirC leads to the production of the intermediate phomamide (PubMed:27390873). This step is essential to form the reactive thiol group required for toxicity of sirodesmin PL (PubMed:27390873). The next steps of sirodesmin biosynthesis are not well understood yet, but some predictions could be made from intermediate compounds identification (PubMed:18272357). Phomamide is converted into phomalizarine via oxidation, probably by sirT (PubMed:18272357). Further oxidation, methylation (by sirM or sirN) and reduction steps convert phomalizarine to deacetyl sirodesmin (PubMed:18272357). Finally, acetyltransferase sirH probably acetylates deacetyl sirodesmin to produce sirodesmin PL (PubMed:18272357).</text>
</comment>
<comment type="pathway">
    <text evidence="9">Mycotoxin biosynthesis.</text>
</comment>
<comment type="similarity">
    <text evidence="8">Belongs to the aldo/keto reductase family. Aldo/keto reductase 2 subfamily.</text>
</comment>
<gene>
    <name evidence="7" type="primary">sirO</name>
</gene>